<keyword id="KW-0521">NADP</keyword>
<keyword id="KW-0554">One-carbon metabolism</keyword>
<keyword id="KW-0560">Oxidoreductase</keyword>
<keyword id="KW-1185">Reference proteome</keyword>
<gene>
    <name type="primary">dhfr-1</name>
    <name type="ORF">C36B1.7</name>
</gene>
<feature type="chain" id="PRO_0000186372" description="Putative dihydrofolate reductase">
    <location>
        <begin position="1"/>
        <end position="189"/>
    </location>
</feature>
<feature type="domain" description="DHFR" evidence="2">
    <location>
        <begin position="3"/>
        <end position="185"/>
    </location>
</feature>
<feature type="binding site" evidence="1">
    <location>
        <position position="9"/>
    </location>
    <ligand>
        <name>NADP(+)</name>
        <dbReference type="ChEBI" id="CHEBI:58349"/>
    </ligand>
</feature>
<feature type="binding site" evidence="1">
    <location>
        <begin position="15"/>
        <end position="21"/>
    </location>
    <ligand>
        <name>NADP(+)</name>
        <dbReference type="ChEBI" id="CHEBI:58349"/>
    </ligand>
</feature>
<feature type="binding site" evidence="1">
    <location>
        <begin position="29"/>
        <end position="34"/>
    </location>
    <ligand>
        <name>substrate</name>
    </ligand>
</feature>
<feature type="binding site" evidence="1">
    <location>
        <begin position="53"/>
        <end position="55"/>
    </location>
    <ligand>
        <name>NADP(+)</name>
        <dbReference type="ChEBI" id="CHEBI:58349"/>
    </ligand>
</feature>
<feature type="binding site" evidence="1">
    <location>
        <position position="69"/>
    </location>
    <ligand>
        <name>substrate</name>
    </ligand>
</feature>
<feature type="binding site" evidence="1">
    <location>
        <begin position="75"/>
        <end position="77"/>
    </location>
    <ligand>
        <name>NADP(+)</name>
        <dbReference type="ChEBI" id="CHEBI:58349"/>
    </ligand>
</feature>
<feature type="binding site" evidence="1">
    <location>
        <begin position="115"/>
        <end position="122"/>
    </location>
    <ligand>
        <name>NADP(+)</name>
        <dbReference type="ChEBI" id="CHEBI:58349"/>
    </ligand>
</feature>
<accession>Q93341</accession>
<reference key="1">
    <citation type="journal article" date="1998" name="Science">
        <title>Genome sequence of the nematode C. elegans: a platform for investigating biology.</title>
        <authorList>
            <consortium name="The C. elegans sequencing consortium"/>
        </authorList>
    </citation>
    <scope>NUCLEOTIDE SEQUENCE [LARGE SCALE GENOMIC DNA]</scope>
    <source>
        <strain>Bristol N2</strain>
    </source>
</reference>
<name>DYR_CAEEL</name>
<proteinExistence type="inferred from homology"/>
<comment type="function">
    <text evidence="1">Key enzyme in folate metabolism. Catalyzes an essential reaction for de novo glycine and purine synthesis, and for DNA precursor synthesis (By similarity).</text>
</comment>
<comment type="catalytic activity">
    <reaction evidence="2">
        <text>(6S)-5,6,7,8-tetrahydrofolate + NADP(+) = 7,8-dihydrofolate + NADPH + H(+)</text>
        <dbReference type="Rhea" id="RHEA:15009"/>
        <dbReference type="ChEBI" id="CHEBI:15378"/>
        <dbReference type="ChEBI" id="CHEBI:57451"/>
        <dbReference type="ChEBI" id="CHEBI:57453"/>
        <dbReference type="ChEBI" id="CHEBI:57783"/>
        <dbReference type="ChEBI" id="CHEBI:58349"/>
        <dbReference type="EC" id="1.5.1.3"/>
    </reaction>
</comment>
<comment type="pathway">
    <text>Cofactor biosynthesis; tetrahydrofolate biosynthesis; 5,6,7,8-tetrahydrofolate from 7,8-dihydrofolate: step 1/1.</text>
</comment>
<comment type="similarity">
    <text evidence="3">Belongs to the dihydrofolate reductase family.</text>
</comment>
<evidence type="ECO:0000250" key="1"/>
<evidence type="ECO:0000255" key="2">
    <source>
        <dbReference type="PROSITE-ProRule" id="PRU00660"/>
    </source>
</evidence>
<evidence type="ECO:0000305" key="3"/>
<protein>
    <recommendedName>
        <fullName>Putative dihydrofolate reductase</fullName>
        <ecNumber>1.5.1.3</ecNumber>
    </recommendedName>
</protein>
<dbReference type="EC" id="1.5.1.3"/>
<dbReference type="EMBL" id="Z80215">
    <property type="protein sequence ID" value="CAB02272.1"/>
    <property type="molecule type" value="Genomic_DNA"/>
</dbReference>
<dbReference type="PIR" id="T19778">
    <property type="entry name" value="T19778"/>
</dbReference>
<dbReference type="RefSeq" id="NP_492364.1">
    <property type="nucleotide sequence ID" value="NM_059963.7"/>
</dbReference>
<dbReference type="SMR" id="Q93341"/>
<dbReference type="BioGRID" id="38114">
    <property type="interactions" value="2"/>
</dbReference>
<dbReference type="FunCoup" id="Q93341">
    <property type="interactions" value="1309"/>
</dbReference>
<dbReference type="IntAct" id="Q93341">
    <property type="interactions" value="1"/>
</dbReference>
<dbReference type="STRING" id="6239.C36B1.7.1"/>
<dbReference type="PaxDb" id="6239-C36B1.7"/>
<dbReference type="PeptideAtlas" id="Q93341"/>
<dbReference type="EnsemblMetazoa" id="C36B1.7.1">
    <property type="protein sequence ID" value="C36B1.7.1"/>
    <property type="gene ID" value="WBGene00007974"/>
</dbReference>
<dbReference type="GeneID" id="172681"/>
<dbReference type="KEGG" id="cel:CELE_C36B1.7"/>
<dbReference type="UCSC" id="C36B1.7">
    <property type="organism name" value="c. elegans"/>
</dbReference>
<dbReference type="AGR" id="WB:WBGene00007974"/>
<dbReference type="CTD" id="172681"/>
<dbReference type="WormBase" id="C36B1.7">
    <property type="protein sequence ID" value="CE05374"/>
    <property type="gene ID" value="WBGene00007974"/>
    <property type="gene designation" value="dhfr-1"/>
</dbReference>
<dbReference type="eggNOG" id="KOG1324">
    <property type="taxonomic scope" value="Eukaryota"/>
</dbReference>
<dbReference type="GeneTree" id="ENSGT00940000168797"/>
<dbReference type="HOGENOM" id="CLU_043966_2_3_1"/>
<dbReference type="InParanoid" id="Q93341"/>
<dbReference type="OMA" id="QYEFQMW"/>
<dbReference type="OrthoDB" id="4664297at2759"/>
<dbReference type="PhylomeDB" id="Q93341"/>
<dbReference type="Reactome" id="R-CEL-196757">
    <property type="pathway name" value="Metabolism of folate and pterines"/>
</dbReference>
<dbReference type="UniPathway" id="UPA00077">
    <property type="reaction ID" value="UER00158"/>
</dbReference>
<dbReference type="PRO" id="PR:Q93341"/>
<dbReference type="Proteomes" id="UP000001940">
    <property type="component" value="Chromosome I"/>
</dbReference>
<dbReference type="Bgee" id="WBGene00007974">
    <property type="expression patterns" value="Expressed in germ line (C elegans) and 4 other cell types or tissues"/>
</dbReference>
<dbReference type="GO" id="GO:0005739">
    <property type="term" value="C:mitochondrion"/>
    <property type="evidence" value="ECO:0000318"/>
    <property type="project" value="GO_Central"/>
</dbReference>
<dbReference type="GO" id="GO:0004146">
    <property type="term" value="F:dihydrofolate reductase activity"/>
    <property type="evidence" value="ECO:0000318"/>
    <property type="project" value="GO_Central"/>
</dbReference>
<dbReference type="GO" id="GO:0050661">
    <property type="term" value="F:NADP binding"/>
    <property type="evidence" value="ECO:0000318"/>
    <property type="project" value="GO_Central"/>
</dbReference>
<dbReference type="GO" id="GO:0046452">
    <property type="term" value="P:dihydrofolate metabolic process"/>
    <property type="evidence" value="ECO:0000318"/>
    <property type="project" value="GO_Central"/>
</dbReference>
<dbReference type="GO" id="GO:0046655">
    <property type="term" value="P:folic acid metabolic process"/>
    <property type="evidence" value="ECO:0000318"/>
    <property type="project" value="GO_Central"/>
</dbReference>
<dbReference type="GO" id="GO:0006730">
    <property type="term" value="P:one-carbon metabolic process"/>
    <property type="evidence" value="ECO:0007669"/>
    <property type="project" value="UniProtKB-KW"/>
</dbReference>
<dbReference type="GO" id="GO:0046654">
    <property type="term" value="P:tetrahydrofolate biosynthetic process"/>
    <property type="evidence" value="ECO:0000318"/>
    <property type="project" value="GO_Central"/>
</dbReference>
<dbReference type="CDD" id="cd00209">
    <property type="entry name" value="DHFR"/>
    <property type="match status" value="1"/>
</dbReference>
<dbReference type="FunFam" id="3.40.430.10:FF:000023">
    <property type="entry name" value="Putative dihydrofolate reductase"/>
    <property type="match status" value="1"/>
</dbReference>
<dbReference type="Gene3D" id="3.40.430.10">
    <property type="entry name" value="Dihydrofolate Reductase, subunit A"/>
    <property type="match status" value="1"/>
</dbReference>
<dbReference type="InterPro" id="IPR012259">
    <property type="entry name" value="DHFR"/>
</dbReference>
<dbReference type="InterPro" id="IPR024072">
    <property type="entry name" value="DHFR-like_dom_sf"/>
</dbReference>
<dbReference type="InterPro" id="IPR017925">
    <property type="entry name" value="DHFR_CS"/>
</dbReference>
<dbReference type="InterPro" id="IPR001796">
    <property type="entry name" value="DHFR_dom"/>
</dbReference>
<dbReference type="PANTHER" id="PTHR48069">
    <property type="entry name" value="DIHYDROFOLATE REDUCTASE"/>
    <property type="match status" value="1"/>
</dbReference>
<dbReference type="PANTHER" id="PTHR48069:SF3">
    <property type="entry name" value="DIHYDROFOLATE REDUCTASE"/>
    <property type="match status" value="1"/>
</dbReference>
<dbReference type="Pfam" id="PF00186">
    <property type="entry name" value="DHFR_1"/>
    <property type="match status" value="1"/>
</dbReference>
<dbReference type="PRINTS" id="PR00070">
    <property type="entry name" value="DHFR"/>
</dbReference>
<dbReference type="SUPFAM" id="SSF53597">
    <property type="entry name" value="Dihydrofolate reductase-like"/>
    <property type="match status" value="1"/>
</dbReference>
<dbReference type="PROSITE" id="PS00075">
    <property type="entry name" value="DHFR_1"/>
    <property type="match status" value="1"/>
</dbReference>
<dbReference type="PROSITE" id="PS51330">
    <property type="entry name" value="DHFR_2"/>
    <property type="match status" value="1"/>
</dbReference>
<sequence length="189" mass="21602">MRKMNLIVAMDAEGGIGKNGVLPWRIKKDMQYFASVTKNVSDQSKRNAVLMGRKCWESIPVTRRPLAGRLNIVLSRQLPAQKSDDYIVVNSLEAAMKLLSEPPFVDSIETIWNIGGAEIYDLALRENLVDEIHLTRIFKNFEADVHLKSLDFSKMEKVQNAEVSSENSEIFEENGLKFEFCKWKVVENH</sequence>
<organism>
    <name type="scientific">Caenorhabditis elegans</name>
    <dbReference type="NCBI Taxonomy" id="6239"/>
    <lineage>
        <taxon>Eukaryota</taxon>
        <taxon>Metazoa</taxon>
        <taxon>Ecdysozoa</taxon>
        <taxon>Nematoda</taxon>
        <taxon>Chromadorea</taxon>
        <taxon>Rhabditida</taxon>
        <taxon>Rhabditina</taxon>
        <taxon>Rhabditomorpha</taxon>
        <taxon>Rhabditoidea</taxon>
        <taxon>Rhabditidae</taxon>
        <taxon>Peloderinae</taxon>
        <taxon>Caenorhabditis</taxon>
    </lineage>
</organism>